<evidence type="ECO:0000250" key="1">
    <source>
        <dbReference type="UniProtKB" id="P32639"/>
    </source>
</evidence>
<evidence type="ECO:0000255" key="2"/>
<evidence type="ECO:0000255" key="3">
    <source>
        <dbReference type="PROSITE-ProRule" id="PRU00541"/>
    </source>
</evidence>
<evidence type="ECO:0000255" key="4">
    <source>
        <dbReference type="PROSITE-ProRule" id="PRU00542"/>
    </source>
</evidence>
<evidence type="ECO:0000256" key="5">
    <source>
        <dbReference type="SAM" id="MobiDB-lite"/>
    </source>
</evidence>
<evidence type="ECO:0000305" key="6"/>
<evidence type="ECO:0000312" key="7">
    <source>
        <dbReference type="Araport" id="AT5G61140"/>
    </source>
</evidence>
<evidence type="ECO:0000312" key="8">
    <source>
        <dbReference type="EMBL" id="BAB10376.1"/>
    </source>
</evidence>
<reference key="1">
    <citation type="journal article" date="1997" name="DNA Res.">
        <title>Structural analysis of Arabidopsis thaliana chromosome 5. II. Sequence features of the regions of 1,044,062 bp covered by thirteen physically assigned P1 clones.</title>
        <authorList>
            <person name="Kotani H."/>
            <person name="Nakamura Y."/>
            <person name="Sato S."/>
            <person name="Kaneko T."/>
            <person name="Asamizu E."/>
            <person name="Miyajima N."/>
            <person name="Tabata S."/>
        </authorList>
    </citation>
    <scope>NUCLEOTIDE SEQUENCE [LARGE SCALE GENOMIC DNA]</scope>
    <source>
        <strain>cv. Columbia</strain>
    </source>
</reference>
<reference key="2">
    <citation type="journal article" date="2017" name="Plant J.">
        <title>Araport11: a complete reannotation of the Arabidopsis thaliana reference genome.</title>
        <authorList>
            <person name="Cheng C.Y."/>
            <person name="Krishnakumar V."/>
            <person name="Chan A.P."/>
            <person name="Thibaud-Nissen F."/>
            <person name="Schobel S."/>
            <person name="Town C.D."/>
        </authorList>
    </citation>
    <scope>GENOME REANNOTATION</scope>
    <source>
        <strain>cv. Columbia</strain>
    </source>
</reference>
<reference key="3">
    <citation type="journal article" date="2003" name="Science">
        <title>Empirical analysis of transcriptional activity in the Arabidopsis genome.</title>
        <authorList>
            <person name="Yamada K."/>
            <person name="Lim J."/>
            <person name="Dale J.M."/>
            <person name="Chen H."/>
            <person name="Shinn P."/>
            <person name="Palm C.J."/>
            <person name="Southwick A.M."/>
            <person name="Wu H.C."/>
            <person name="Kim C.J."/>
            <person name="Nguyen M."/>
            <person name="Pham P.K."/>
            <person name="Cheuk R.F."/>
            <person name="Karlin-Newmann G."/>
            <person name="Liu S.X."/>
            <person name="Lam B."/>
            <person name="Sakano H."/>
            <person name="Wu T."/>
            <person name="Yu G."/>
            <person name="Miranda M."/>
            <person name="Quach H.L."/>
            <person name="Tripp M."/>
            <person name="Chang C.H."/>
            <person name="Lee J.M."/>
            <person name="Toriumi M.J."/>
            <person name="Chan M.M."/>
            <person name="Tang C.C."/>
            <person name="Onodera C.S."/>
            <person name="Deng J.M."/>
            <person name="Akiyama K."/>
            <person name="Ansari Y."/>
            <person name="Arakawa T."/>
            <person name="Banh J."/>
            <person name="Banno F."/>
            <person name="Bowser L."/>
            <person name="Brooks S.Y."/>
            <person name="Carninci P."/>
            <person name="Chao Q."/>
            <person name="Choy N."/>
            <person name="Enju A."/>
            <person name="Goldsmith A.D."/>
            <person name="Gurjal M."/>
            <person name="Hansen N.F."/>
            <person name="Hayashizaki Y."/>
            <person name="Johnson-Hopson C."/>
            <person name="Hsuan V.W."/>
            <person name="Iida K."/>
            <person name="Karnes M."/>
            <person name="Khan S."/>
            <person name="Koesema E."/>
            <person name="Ishida J."/>
            <person name="Jiang P.X."/>
            <person name="Jones T."/>
            <person name="Kawai J."/>
            <person name="Kamiya A."/>
            <person name="Meyers C."/>
            <person name="Nakajima M."/>
            <person name="Narusaka M."/>
            <person name="Seki M."/>
            <person name="Sakurai T."/>
            <person name="Satou M."/>
            <person name="Tamse R."/>
            <person name="Vaysberg M."/>
            <person name="Wallender E.K."/>
            <person name="Wong C."/>
            <person name="Yamamura Y."/>
            <person name="Yuan S."/>
            <person name="Shinozaki K."/>
            <person name="Davis R.W."/>
            <person name="Theologis A."/>
            <person name="Ecker J.R."/>
        </authorList>
    </citation>
    <scope>NUCLEOTIDE SEQUENCE [LARGE SCALE MRNA] OF 1353-2157</scope>
    <source>
        <strain>cv. Columbia</strain>
    </source>
</reference>
<reference key="4">
    <citation type="journal article" date="2013" name="PLoS ONE">
        <title>Genome-wide comparative in silico analysis of the RNA helicase gene family in Zea mays and Glycine max: a comparison with Arabidopsis and Oryza sativa.</title>
        <authorList>
            <person name="Xu R."/>
            <person name="Zhang S."/>
            <person name="Huang J."/>
            <person name="Zheng C."/>
        </authorList>
    </citation>
    <scope>GENE FAMILY</scope>
</reference>
<proteinExistence type="evidence at transcript level"/>
<gene>
    <name evidence="6" type="primary">BRR2C</name>
    <name evidence="7" type="ordered locus">At5g61140</name>
    <name evidence="8" type="ORF">MAF19.14</name>
</gene>
<feature type="chain" id="PRO_0000435301" description="DExH-box ATP-dependent RNA helicase DExH14">
    <location>
        <begin position="1"/>
        <end position="2157"/>
    </location>
</feature>
<feature type="domain" description="Helicase ATP-binding 1" evidence="3">
    <location>
        <begin position="517"/>
        <end position="699"/>
    </location>
</feature>
<feature type="domain" description="Helicase C-terminal 1" evidence="4">
    <location>
        <begin position="734"/>
        <end position="932"/>
    </location>
</feature>
<feature type="domain" description="SEC63 1" evidence="2">
    <location>
        <begin position="1008"/>
        <end position="1315"/>
    </location>
</feature>
<feature type="domain" description="Helicase ATP-binding 2" evidence="3">
    <location>
        <begin position="1365"/>
        <end position="1540"/>
    </location>
</feature>
<feature type="domain" description="Helicase C-terminal 2" evidence="4">
    <location>
        <begin position="1571"/>
        <end position="1780"/>
    </location>
</feature>
<feature type="domain" description="SEC63 2" evidence="2">
    <location>
        <begin position="1839"/>
        <end position="2150"/>
    </location>
</feature>
<feature type="region of interest" description="Disordered" evidence="5">
    <location>
        <begin position="374"/>
        <end position="394"/>
    </location>
</feature>
<feature type="short sequence motif" description="DEVH box" evidence="6">
    <location>
        <begin position="641"/>
        <end position="644"/>
    </location>
</feature>
<feature type="short sequence motif" description="DEIH box" evidence="6">
    <location>
        <begin position="1482"/>
        <end position="1485"/>
    </location>
</feature>
<feature type="compositionally biased region" description="Polar residues" evidence="5">
    <location>
        <begin position="375"/>
        <end position="394"/>
    </location>
</feature>
<feature type="binding site" evidence="3">
    <location>
        <begin position="530"/>
        <end position="537"/>
    </location>
    <ligand>
        <name>ATP</name>
        <dbReference type="ChEBI" id="CHEBI:30616"/>
    </ligand>
</feature>
<feature type="binding site" evidence="3">
    <location>
        <begin position="1378"/>
        <end position="1385"/>
    </location>
    <ligand>
        <name>ATP</name>
        <dbReference type="ChEBI" id="CHEBI:30616"/>
    </ligand>
</feature>
<dbReference type="EC" id="3.6.4.13" evidence="6"/>
<dbReference type="EMBL" id="AB006696">
    <property type="protein sequence ID" value="BAB10376.1"/>
    <property type="molecule type" value="Genomic_DNA"/>
</dbReference>
<dbReference type="EMBL" id="CP002688">
    <property type="protein sequence ID" value="AED97426.1"/>
    <property type="molecule type" value="Genomic_DNA"/>
</dbReference>
<dbReference type="EMBL" id="AY074505">
    <property type="protein sequence ID" value="AAL69489.2"/>
    <property type="molecule type" value="mRNA"/>
</dbReference>
<dbReference type="RefSeq" id="NP_001190584.1">
    <molecule id="Q9FNQ1-1"/>
    <property type="nucleotide sequence ID" value="NM_001203655.2"/>
</dbReference>
<dbReference type="SMR" id="Q9FNQ1"/>
<dbReference type="FunCoup" id="Q9FNQ1">
    <property type="interactions" value="3256"/>
</dbReference>
<dbReference type="IntAct" id="Q9FNQ1">
    <property type="interactions" value="1"/>
</dbReference>
<dbReference type="STRING" id="3702.Q9FNQ1"/>
<dbReference type="GlyGen" id="Q9FNQ1">
    <property type="glycosylation" value="2 sites"/>
</dbReference>
<dbReference type="iPTMnet" id="Q9FNQ1"/>
<dbReference type="PaxDb" id="3702-AT5G61140.2"/>
<dbReference type="ProteomicsDB" id="224134">
    <molecule id="Q9FNQ1-1"/>
</dbReference>
<dbReference type="EnsemblPlants" id="AT5G61140.2">
    <molecule id="Q9FNQ1-1"/>
    <property type="protein sequence ID" value="AT5G61140.2"/>
    <property type="gene ID" value="AT5G61140"/>
</dbReference>
<dbReference type="GeneID" id="836235"/>
<dbReference type="Gramene" id="AT5G61140.2">
    <molecule id="Q9FNQ1-1"/>
    <property type="protein sequence ID" value="AT5G61140.2"/>
    <property type="gene ID" value="AT5G61140"/>
</dbReference>
<dbReference type="KEGG" id="ath:AT5G61140"/>
<dbReference type="Araport" id="AT5G61140"/>
<dbReference type="TAIR" id="AT5G61140">
    <property type="gene designation" value="BRR2C"/>
</dbReference>
<dbReference type="eggNOG" id="KOG0952">
    <property type="taxonomic scope" value="Eukaryota"/>
</dbReference>
<dbReference type="HOGENOM" id="CLU_000335_2_1_1"/>
<dbReference type="InParanoid" id="Q9FNQ1"/>
<dbReference type="OMA" id="MCSATEF"/>
<dbReference type="PhylomeDB" id="Q9FNQ1"/>
<dbReference type="CD-CODE" id="4299E36E">
    <property type="entry name" value="Nucleolus"/>
</dbReference>
<dbReference type="PRO" id="PR:Q9FNQ1"/>
<dbReference type="Proteomes" id="UP000006548">
    <property type="component" value="Chromosome 5"/>
</dbReference>
<dbReference type="ExpressionAtlas" id="Q9FNQ1">
    <property type="expression patterns" value="baseline and differential"/>
</dbReference>
<dbReference type="GO" id="GO:0005681">
    <property type="term" value="C:spliceosomal complex"/>
    <property type="evidence" value="ECO:0007669"/>
    <property type="project" value="UniProtKB-KW"/>
</dbReference>
<dbReference type="GO" id="GO:0005524">
    <property type="term" value="F:ATP binding"/>
    <property type="evidence" value="ECO:0007669"/>
    <property type="project" value="UniProtKB-KW"/>
</dbReference>
<dbReference type="GO" id="GO:0016887">
    <property type="term" value="F:ATP hydrolysis activity"/>
    <property type="evidence" value="ECO:0007669"/>
    <property type="project" value="InterPro"/>
</dbReference>
<dbReference type="GO" id="GO:0003729">
    <property type="term" value="F:mRNA binding"/>
    <property type="evidence" value="ECO:0007005"/>
    <property type="project" value="TAIR"/>
</dbReference>
<dbReference type="GO" id="GO:0003724">
    <property type="term" value="F:RNA helicase activity"/>
    <property type="evidence" value="ECO:0007669"/>
    <property type="project" value="UniProtKB-EC"/>
</dbReference>
<dbReference type="GO" id="GO:0006397">
    <property type="term" value="P:mRNA processing"/>
    <property type="evidence" value="ECO:0007669"/>
    <property type="project" value="UniProtKB-KW"/>
</dbReference>
<dbReference type="GO" id="GO:0008380">
    <property type="term" value="P:RNA splicing"/>
    <property type="evidence" value="ECO:0007669"/>
    <property type="project" value="UniProtKB-KW"/>
</dbReference>
<dbReference type="CDD" id="cd18020">
    <property type="entry name" value="DEXHc_ASCC3_1"/>
    <property type="match status" value="1"/>
</dbReference>
<dbReference type="CDD" id="cd18022">
    <property type="entry name" value="DEXHc_ASCC3_2"/>
    <property type="match status" value="1"/>
</dbReference>
<dbReference type="CDD" id="cd18795">
    <property type="entry name" value="SF2_C_Ski2"/>
    <property type="match status" value="2"/>
</dbReference>
<dbReference type="FunFam" id="3.40.50.300:FF:000198">
    <property type="entry name" value="Activating signal cointegrator 1 complex subunit"/>
    <property type="match status" value="1"/>
</dbReference>
<dbReference type="FunFam" id="1.10.3380.10:FF:000002">
    <property type="entry name" value="Activating signal cointegrator 1 complex subunit 3"/>
    <property type="match status" value="1"/>
</dbReference>
<dbReference type="FunFam" id="3.40.50.300:FF:000231">
    <property type="entry name" value="Activating signal cointegrator 1 complex subunit 3"/>
    <property type="match status" value="1"/>
</dbReference>
<dbReference type="FunFam" id="2.60.40.150:FF:000207">
    <property type="entry name" value="DExH-box ATP-dependent RNA helicase DExH14"/>
    <property type="match status" value="1"/>
</dbReference>
<dbReference type="FunFam" id="2.60.40.150:FF:000004">
    <property type="entry name" value="RNA helicase, activating signal cointegrator 1"/>
    <property type="match status" value="1"/>
</dbReference>
<dbReference type="FunFam" id="3.40.50.300:FF:000102">
    <property type="entry name" value="RNA helicase, activating signal cointegrator 1"/>
    <property type="match status" value="1"/>
</dbReference>
<dbReference type="FunFam" id="1.10.10.10:FF:000012">
    <property type="entry name" value="U5 small nuclear ribonucleoprotein helicase"/>
    <property type="match status" value="1"/>
</dbReference>
<dbReference type="FunFam" id="1.10.10.10:FF:000024">
    <property type="entry name" value="U5 small nuclear ribonucleoprotein helicase"/>
    <property type="match status" value="1"/>
</dbReference>
<dbReference type="FunFam" id="1.10.150.20:FF:000004">
    <property type="entry name" value="U5 small nuclear ribonucleoprotein helicase"/>
    <property type="match status" value="1"/>
</dbReference>
<dbReference type="FunFam" id="1.10.3380.10:FF:000001">
    <property type="entry name" value="U5 small nuclear ribonucleoprotein helicase"/>
    <property type="match status" value="1"/>
</dbReference>
<dbReference type="FunFam" id="3.40.50.300:FF:000062">
    <property type="entry name" value="U5 small nuclear ribonucleoprotein helicase"/>
    <property type="match status" value="1"/>
</dbReference>
<dbReference type="Gene3D" id="1.10.150.20">
    <property type="entry name" value="5' to 3' exonuclease, C-terminal subdomain"/>
    <property type="match status" value="1"/>
</dbReference>
<dbReference type="Gene3D" id="2.60.40.150">
    <property type="entry name" value="C2 domain"/>
    <property type="match status" value="2"/>
</dbReference>
<dbReference type="Gene3D" id="3.40.50.300">
    <property type="entry name" value="P-loop containing nucleotide triphosphate hydrolases"/>
    <property type="match status" value="4"/>
</dbReference>
<dbReference type="Gene3D" id="1.10.3380.10">
    <property type="entry name" value="Sec63 N-terminal domain-like domain"/>
    <property type="match status" value="2"/>
</dbReference>
<dbReference type="Gene3D" id="1.10.10.10">
    <property type="entry name" value="Winged helix-like DNA-binding domain superfamily/Winged helix DNA-binding domain"/>
    <property type="match status" value="2"/>
</dbReference>
<dbReference type="InterPro" id="IPR003593">
    <property type="entry name" value="AAA+_ATPase"/>
</dbReference>
<dbReference type="InterPro" id="IPR035892">
    <property type="entry name" value="C2_domain_sf"/>
</dbReference>
<dbReference type="InterPro" id="IPR011545">
    <property type="entry name" value="DEAD/DEAH_box_helicase_dom"/>
</dbReference>
<dbReference type="InterPro" id="IPR056379">
    <property type="entry name" value="DExH14_plug"/>
</dbReference>
<dbReference type="InterPro" id="IPR050474">
    <property type="entry name" value="Hel308_SKI2-like"/>
</dbReference>
<dbReference type="InterPro" id="IPR014001">
    <property type="entry name" value="Helicase_ATP-bd"/>
</dbReference>
<dbReference type="InterPro" id="IPR001650">
    <property type="entry name" value="Helicase_C-like"/>
</dbReference>
<dbReference type="InterPro" id="IPR014756">
    <property type="entry name" value="Ig_E-set"/>
</dbReference>
<dbReference type="InterPro" id="IPR027417">
    <property type="entry name" value="P-loop_NTPase"/>
</dbReference>
<dbReference type="InterPro" id="IPR004179">
    <property type="entry name" value="Sec63-dom"/>
</dbReference>
<dbReference type="InterPro" id="IPR036388">
    <property type="entry name" value="WH-like_DNA-bd_sf"/>
</dbReference>
<dbReference type="InterPro" id="IPR036390">
    <property type="entry name" value="WH_DNA-bd_sf"/>
</dbReference>
<dbReference type="PANTHER" id="PTHR47961:SF13">
    <property type="entry name" value="ACTIVATING SIGNAL COINTEGRATOR 1 COMPLEX SUBUNIT 3"/>
    <property type="match status" value="1"/>
</dbReference>
<dbReference type="PANTHER" id="PTHR47961">
    <property type="entry name" value="DNA POLYMERASE THETA, PUTATIVE (AFU_ORTHOLOGUE AFUA_1G05260)-RELATED"/>
    <property type="match status" value="1"/>
</dbReference>
<dbReference type="Pfam" id="PF00270">
    <property type="entry name" value="DEAD"/>
    <property type="match status" value="2"/>
</dbReference>
<dbReference type="Pfam" id="PF24557">
    <property type="entry name" value="DExH14_plug"/>
    <property type="match status" value="1"/>
</dbReference>
<dbReference type="Pfam" id="PF00271">
    <property type="entry name" value="Helicase_C"/>
    <property type="match status" value="2"/>
</dbReference>
<dbReference type="Pfam" id="PF02889">
    <property type="entry name" value="Sec63"/>
    <property type="match status" value="2"/>
</dbReference>
<dbReference type="Pfam" id="PF23445">
    <property type="entry name" value="SNRNP200_wHTH"/>
    <property type="match status" value="2"/>
</dbReference>
<dbReference type="PIRSF" id="PIRSF039073">
    <property type="entry name" value="BRR2"/>
    <property type="match status" value="1"/>
</dbReference>
<dbReference type="SMART" id="SM00382">
    <property type="entry name" value="AAA"/>
    <property type="match status" value="2"/>
</dbReference>
<dbReference type="SMART" id="SM00487">
    <property type="entry name" value="DEXDc"/>
    <property type="match status" value="2"/>
</dbReference>
<dbReference type="SMART" id="SM00490">
    <property type="entry name" value="HELICc"/>
    <property type="match status" value="2"/>
</dbReference>
<dbReference type="SMART" id="SM00973">
    <property type="entry name" value="Sec63"/>
    <property type="match status" value="2"/>
</dbReference>
<dbReference type="SUPFAM" id="SSF81296">
    <property type="entry name" value="E set domains"/>
    <property type="match status" value="1"/>
</dbReference>
<dbReference type="SUPFAM" id="SSF52540">
    <property type="entry name" value="P-loop containing nucleoside triphosphate hydrolases"/>
    <property type="match status" value="4"/>
</dbReference>
<dbReference type="SUPFAM" id="SSF158702">
    <property type="entry name" value="Sec63 N-terminal domain-like"/>
    <property type="match status" value="2"/>
</dbReference>
<dbReference type="SUPFAM" id="SSF46785">
    <property type="entry name" value="Winged helix' DNA-binding domain"/>
    <property type="match status" value="2"/>
</dbReference>
<dbReference type="PROSITE" id="PS51192">
    <property type="entry name" value="HELICASE_ATP_BIND_1"/>
    <property type="match status" value="2"/>
</dbReference>
<dbReference type="PROSITE" id="PS51194">
    <property type="entry name" value="HELICASE_CTER"/>
    <property type="match status" value="2"/>
</dbReference>
<organism>
    <name type="scientific">Arabidopsis thaliana</name>
    <name type="common">Mouse-ear cress</name>
    <dbReference type="NCBI Taxonomy" id="3702"/>
    <lineage>
        <taxon>Eukaryota</taxon>
        <taxon>Viridiplantae</taxon>
        <taxon>Streptophyta</taxon>
        <taxon>Embryophyta</taxon>
        <taxon>Tracheophyta</taxon>
        <taxon>Spermatophyta</taxon>
        <taxon>Magnoliopsida</taxon>
        <taxon>eudicotyledons</taxon>
        <taxon>Gunneridae</taxon>
        <taxon>Pentapetalae</taxon>
        <taxon>rosids</taxon>
        <taxon>malvids</taxon>
        <taxon>Brassicales</taxon>
        <taxon>Brassicaceae</taxon>
        <taxon>Camelineae</taxon>
        <taxon>Arabidopsis</taxon>
    </lineage>
</organism>
<comment type="function">
    <text evidence="1">RNA helicase that plays an essential role in pre-mRNA splicing as component of the U5 snRNP and U4/U6-U5 tri-snRNP complexes. Involved in spliceosome assembly, activation and disassembly.</text>
</comment>
<comment type="catalytic activity">
    <reaction evidence="6">
        <text>ATP + H2O = ADP + phosphate + H(+)</text>
        <dbReference type="Rhea" id="RHEA:13065"/>
        <dbReference type="ChEBI" id="CHEBI:15377"/>
        <dbReference type="ChEBI" id="CHEBI:15378"/>
        <dbReference type="ChEBI" id="CHEBI:30616"/>
        <dbReference type="ChEBI" id="CHEBI:43474"/>
        <dbReference type="ChEBI" id="CHEBI:456216"/>
        <dbReference type="EC" id="3.6.4.13"/>
    </reaction>
</comment>
<comment type="subcellular location">
    <subcellularLocation>
        <location evidence="6">Nucleus</location>
    </subcellularLocation>
</comment>
<comment type="alternative products">
    <event type="alternative splicing"/>
    <isoform>
        <id>Q9FNQ1-1</id>
        <name>1</name>
        <sequence type="displayed"/>
    </isoform>
    <text>A number of isoforms are produced. According to EST sequences.</text>
</comment>
<comment type="similarity">
    <text evidence="6">Belongs to the DExH box helicase family.</text>
</comment>
<keyword id="KW-0025">Alternative splicing</keyword>
<keyword id="KW-0067">ATP-binding</keyword>
<keyword id="KW-0347">Helicase</keyword>
<keyword id="KW-0378">Hydrolase</keyword>
<keyword id="KW-0507">mRNA processing</keyword>
<keyword id="KW-0508">mRNA splicing</keyword>
<keyword id="KW-0547">Nucleotide-binding</keyword>
<keyword id="KW-0539">Nucleus</keyword>
<keyword id="KW-1185">Reference proteome</keyword>
<keyword id="KW-0694">RNA-binding</keyword>
<keyword id="KW-0747">Spliceosome</keyword>
<name>DEXHE_ARATH</name>
<accession>Q9FNQ1</accession>
<accession>Q8RY91</accession>
<protein>
    <recommendedName>
        <fullName evidence="6">DExH-box ATP-dependent RNA helicase DExH14</fullName>
        <ecNumber evidence="6">3.6.4.13</ecNumber>
    </recommendedName>
    <alternativeName>
        <fullName evidence="6">BRR2 homolog C</fullName>
        <shortName evidence="6">AtBRR2C</shortName>
    </alternativeName>
    <alternativeName>
        <fullName evidence="6">Pre-mRNA-splicing helicase BRR2C</fullName>
    </alternativeName>
</protein>
<sequence>MVHNSPCNKHKTTSISWTRILAGRCTGLFVQVSNRRRFRTQAIAFFLGEPTRGENTTEEKNPKRHKYRDFVMLVQLPRLTSSLREPFDIDQAYLRRKTILQTLNKPRSSGNRLDESDLAKRIVHQWEGASLEVRQAYKQFIGAVVELIDREVPSDEFREVAFSAYRLFNNPVEEDDSDINDNISISGKKLELQNLVGHAVSDANVKNVASFAQALYSIQPTHQSETYADEVNGGAEFGADLVFNLPARFLVEASLDETGFVDVESNDAHTSFSEGWSGVSDTKNNLSAGKFNLSWLRDACGRMVRETNSQLSREELAMAICRFLDSDKPGEEIAGDLLDLVGDGAFETVQDLIMHRKEIVDAIHHGQMILKSDKAASNTQSRMPTYGTQVTVQTESAKQIEKLRRKEEKKNKRNADLGLESEISEANFSSLLEASEKKTAFEDLIGSGEANSLALALPQGTVRKHLKGYEEVFIPPTPTAQMKPGEKLIEIKELDDFAQAAFHGYKSLNRIQSRIFQTVYHTNENILVCAPTGAGKTNIAMISVLHEIKQHFRDGYLHKNEFKIVYVAPMKALAAEVTSAFSRRLAPLNMVVKELTGDMQLTKTELEETQMIVTTPEKWDVITRKSSDMSMSMLVKLLIIDEVHLLNDDRGAVIEALVARTLRQVESTQTMIRIVGLSATLPSYLQVAQFLRVNTDTGLFYFDSSYRPVPLAQQYIGITEHNFAARNELLNEICYKKVVDSIKQGHQAMIFVHSRKDTSKTAEKLVDLARQYETLDLFTNETHPQFQLMKKDVMKSRNKDLVKFFEAGFGIHHAGMLRSDRTLTERLFSDGLLKVLVCTATLAWGVNLPAHTVVIKGTQLYDAKAGGWKDLGMLDVMQIFGRAGRPQFDKSGEGIIITSHDKLAYYLRLLTSQLPIESQFISSLKDNLNAEVVLGTVTNVKEACAWLGYTYLSIRMKLNPLAYGIGWEEIIADPSLSLKQRALVADAARSLDKAKMMRFDEKSGNFYCTELGRVASHFYIQYSSVETYNEMLKRHMNESEIINMVAHSSEFENIVVREEEQHELETLARSCCPLEVKGGPSNKHGKISILIQLYISRGSIDAFSLVSDASYISASLARIMRALFEICLRKGWCEMTLFMLEYCKAVDRQLWPHQHPLRQFERDLPSDILRKLEERRDDLDHLYEMEEKEIGALIRYNPGGRLVKQHLGYFPSIQLAATVSPITRTVLKVDLLITPNFIWKDRFHGTALRWWILIEDTENDYIYHSDLFTLTKRMARGEPQKLSFTVPIFEPHPPQYYVHAVSDSWLHAETYFTISFHNLALPEARTSHTELLDLKPLPVTSLGNKLYESLYKFSHFNPIQTQIFHVLYHTDNNVLVGAPTGSGKTISAELAMLRLFSTQPDMKVVYIAPLKAIVRERMNDWKKHLVAPLGKEMVEMTGDYTPDLVALLSADIIISTPEKWDGISRNWHTRSYVKKVGLVILDEIHLLGADRGPILEVIVSRMRYISSQTERSVRFVGLSTALANAGDLADWLGVGEIGLFNFKPSVRPVPIEVHIQGYPGKYYCPRMNSMNKPAYAAICTHSPTKPVLIFVSSRRQTRLTALDLIQFAASDEHPRQFLSVSEEDLQMVLSQITDQNLRHTLQFGIGLHHAGLNDHDRSAVEELFTNNKIQVLVSTSTLAWGVNLPAHLVIIKGTEYFDGKTKRYVDFPLTEILQMMGRAGRPQFDQHGKAVILVHEPKKSFYKKFLYEPFPVESSLKEKLHDHFNAEIVSGTIGNKEDAVHYLTWTYLFRRLMANPAYYGLEGTQDETICSYLSRLVQTTFEDLEDSGCLKVNEDSVEPTMLGTIASQYYLCYMTVSMFGSNIGPDTSLEAFLHILAGASEYDELPVRHNEENYNKTLSDRVRYPVDNNHLDDPHVKANLLFQAHFSQLALPISDYNTDLKSVLDQSIRILQAMIDICANSGWLSSSLTCMRLLQMVMQGMWSDQDSSLWMIPCMNDLLLGSLTARGIHTLHQLLNLPRETLQSVTENFPASRLSQDLQRFPRIQMNVRLQKKDSDGKKKPSTLEIRLEKTSKRNSSRALAPRFPKVKDEAWWLVLGDTSTSELFAVKRVSFTGRLITRMELPPNITSFQDTKLILVSDCYLGFEQEHSIEQLARRG</sequence>